<proteinExistence type="inferred from homology"/>
<evidence type="ECO:0000255" key="1">
    <source>
        <dbReference type="HAMAP-Rule" id="MF_01352"/>
    </source>
</evidence>
<protein>
    <recommendedName>
        <fullName evidence="1">NAD(P)H-quinone oxidoreductase subunit M</fullName>
        <ecNumber evidence="1">7.1.1.-</ecNumber>
    </recommendedName>
    <alternativeName>
        <fullName evidence="1">NAD(P)H dehydrogenase I subunit M</fullName>
        <shortName evidence="1">NDH-1 subunit M</shortName>
        <shortName evidence="1">NDH-M</shortName>
    </alternativeName>
</protein>
<dbReference type="EC" id="7.1.1.-" evidence="1"/>
<dbReference type="EMBL" id="CP000097">
    <property type="protein sequence ID" value="ABB25270.1"/>
    <property type="molecule type" value="Genomic_DNA"/>
</dbReference>
<dbReference type="RefSeq" id="WP_011359128.1">
    <property type="nucleotide sequence ID" value="NC_007513.1"/>
</dbReference>
<dbReference type="SMR" id="Q3B058"/>
<dbReference type="STRING" id="316279.Syncc9902_0297"/>
<dbReference type="KEGG" id="sye:Syncc9902_0297"/>
<dbReference type="eggNOG" id="ENOG5031AQM">
    <property type="taxonomic scope" value="Bacteria"/>
</dbReference>
<dbReference type="HOGENOM" id="CLU_137431_0_0_3"/>
<dbReference type="OrthoDB" id="461686at2"/>
<dbReference type="Proteomes" id="UP000002712">
    <property type="component" value="Chromosome"/>
</dbReference>
<dbReference type="GO" id="GO:0031676">
    <property type="term" value="C:plasma membrane-derived thylakoid membrane"/>
    <property type="evidence" value="ECO:0007669"/>
    <property type="project" value="UniProtKB-SubCell"/>
</dbReference>
<dbReference type="GO" id="GO:0016655">
    <property type="term" value="F:oxidoreductase activity, acting on NAD(P)H, quinone or similar compound as acceptor"/>
    <property type="evidence" value="ECO:0007669"/>
    <property type="project" value="UniProtKB-UniRule"/>
</dbReference>
<dbReference type="GO" id="GO:0048038">
    <property type="term" value="F:quinone binding"/>
    <property type="evidence" value="ECO:0007669"/>
    <property type="project" value="UniProtKB-KW"/>
</dbReference>
<dbReference type="HAMAP" id="MF_01352">
    <property type="entry name" value="NDH1_NDH1M"/>
    <property type="match status" value="1"/>
</dbReference>
<dbReference type="InterPro" id="IPR018922">
    <property type="entry name" value="NdhM"/>
</dbReference>
<dbReference type="PANTHER" id="PTHR36900">
    <property type="entry name" value="NAD(P)H-QUINONE OXIDOREDUCTASE SUBUNIT M, CHLOROPLASTIC"/>
    <property type="match status" value="1"/>
</dbReference>
<dbReference type="PANTHER" id="PTHR36900:SF1">
    <property type="entry name" value="NAD(P)H-QUINONE OXIDOREDUCTASE SUBUNIT M, CHLOROPLASTIC"/>
    <property type="match status" value="1"/>
</dbReference>
<dbReference type="Pfam" id="PF10664">
    <property type="entry name" value="NdhM"/>
    <property type="match status" value="1"/>
</dbReference>
<gene>
    <name evidence="1" type="primary">ndhM</name>
    <name type="ordered locus">Syncc9902_0297</name>
</gene>
<comment type="function">
    <text evidence="1">NDH-1 shuttles electrons from an unknown electron donor, via FMN and iron-sulfur (Fe-S) centers, to quinones in the respiratory and/or the photosynthetic chain. The immediate electron acceptor for the enzyme in this species is believed to be plastoquinone. Couples the redox reaction to proton translocation, and thus conserves the redox energy in a proton gradient. Cyanobacterial NDH-1 also plays a role in inorganic carbon-concentration.</text>
</comment>
<comment type="catalytic activity">
    <reaction evidence="1">
        <text>a plastoquinone + NADH + (n+1) H(+)(in) = a plastoquinol + NAD(+) + n H(+)(out)</text>
        <dbReference type="Rhea" id="RHEA:42608"/>
        <dbReference type="Rhea" id="RHEA-COMP:9561"/>
        <dbReference type="Rhea" id="RHEA-COMP:9562"/>
        <dbReference type="ChEBI" id="CHEBI:15378"/>
        <dbReference type="ChEBI" id="CHEBI:17757"/>
        <dbReference type="ChEBI" id="CHEBI:57540"/>
        <dbReference type="ChEBI" id="CHEBI:57945"/>
        <dbReference type="ChEBI" id="CHEBI:62192"/>
    </reaction>
</comment>
<comment type="catalytic activity">
    <reaction evidence="1">
        <text>a plastoquinone + NADPH + (n+1) H(+)(in) = a plastoquinol + NADP(+) + n H(+)(out)</text>
        <dbReference type="Rhea" id="RHEA:42612"/>
        <dbReference type="Rhea" id="RHEA-COMP:9561"/>
        <dbReference type="Rhea" id="RHEA-COMP:9562"/>
        <dbReference type="ChEBI" id="CHEBI:15378"/>
        <dbReference type="ChEBI" id="CHEBI:17757"/>
        <dbReference type="ChEBI" id="CHEBI:57783"/>
        <dbReference type="ChEBI" id="CHEBI:58349"/>
        <dbReference type="ChEBI" id="CHEBI:62192"/>
    </reaction>
</comment>
<comment type="subunit">
    <text evidence="1">NDH-1 can be composed of about 15 different subunits; different subcomplexes with different compositions have been identified which probably have different functions.</text>
</comment>
<comment type="subcellular location">
    <subcellularLocation>
        <location evidence="1">Cellular thylakoid membrane</location>
        <topology evidence="1">Peripheral membrane protein</topology>
        <orientation evidence="1">Cytoplasmic side</orientation>
    </subcellularLocation>
</comment>
<comment type="similarity">
    <text evidence="1">Belongs to the complex I NdhM subunit family.</text>
</comment>
<name>NDHM_SYNS9</name>
<organism>
    <name type="scientific">Synechococcus sp. (strain CC9902)</name>
    <dbReference type="NCBI Taxonomy" id="316279"/>
    <lineage>
        <taxon>Bacteria</taxon>
        <taxon>Bacillati</taxon>
        <taxon>Cyanobacteriota</taxon>
        <taxon>Cyanophyceae</taxon>
        <taxon>Synechococcales</taxon>
        <taxon>Synechococcaceae</taxon>
        <taxon>Synechococcus</taxon>
    </lineage>
</organism>
<keyword id="KW-0472">Membrane</keyword>
<keyword id="KW-0520">NAD</keyword>
<keyword id="KW-0521">NADP</keyword>
<keyword id="KW-0618">Plastoquinone</keyword>
<keyword id="KW-0874">Quinone</keyword>
<keyword id="KW-1185">Reference proteome</keyword>
<keyword id="KW-0793">Thylakoid</keyword>
<keyword id="KW-1278">Translocase</keyword>
<keyword id="KW-0813">Transport</keyword>
<accession>Q3B058</accession>
<sequence>MADTLLKCTTRHVRLFTARVDNDDLVPSANELTLDLDPDNEFIWSESCISQVQQRFKQLVDAAAGGELSDYTLRRIGTDLEGFIRQLLQRGELSYNPEARVQNFSMGLPRTPELL</sequence>
<reference key="1">
    <citation type="submission" date="2005-08" db="EMBL/GenBank/DDBJ databases">
        <title>Complete sequence of Synechococcus sp. CC9902.</title>
        <authorList>
            <person name="Copeland A."/>
            <person name="Lucas S."/>
            <person name="Lapidus A."/>
            <person name="Barry K."/>
            <person name="Detter J.C."/>
            <person name="Glavina T."/>
            <person name="Hammon N."/>
            <person name="Israni S."/>
            <person name="Pitluck S."/>
            <person name="Martinez M."/>
            <person name="Schmutz J."/>
            <person name="Larimer F."/>
            <person name="Land M."/>
            <person name="Kyrpides N."/>
            <person name="Ivanova N."/>
            <person name="Richardson P."/>
        </authorList>
    </citation>
    <scope>NUCLEOTIDE SEQUENCE [LARGE SCALE GENOMIC DNA]</scope>
    <source>
        <strain>CC9902</strain>
    </source>
</reference>
<feature type="chain" id="PRO_0000352203" description="NAD(P)H-quinone oxidoreductase subunit M">
    <location>
        <begin position="1"/>
        <end position="115"/>
    </location>
</feature>